<protein>
    <recommendedName>
        <fullName evidence="1">tRNA N6-adenosine threonylcarbamoyltransferase</fullName>
        <ecNumber evidence="1">2.3.1.234</ecNumber>
    </recommendedName>
    <alternativeName>
        <fullName evidence="1">N6-L-threonylcarbamoyladenine synthase</fullName>
        <shortName evidence="1">t(6)A synthase</shortName>
    </alternativeName>
    <alternativeName>
        <fullName evidence="1">t(6)A37 threonylcarbamoyladenosine biosynthesis protein TsaD</fullName>
    </alternativeName>
    <alternativeName>
        <fullName evidence="1">tRNA threonylcarbamoyladenosine biosynthesis protein TsaD</fullName>
    </alternativeName>
</protein>
<keyword id="KW-0012">Acyltransferase</keyword>
<keyword id="KW-0963">Cytoplasm</keyword>
<keyword id="KW-0408">Iron</keyword>
<keyword id="KW-0479">Metal-binding</keyword>
<keyword id="KW-1185">Reference proteome</keyword>
<keyword id="KW-0808">Transferase</keyword>
<keyword id="KW-0819">tRNA processing</keyword>
<accession>Q5FPS6</accession>
<proteinExistence type="inferred from homology"/>
<evidence type="ECO:0000255" key="1">
    <source>
        <dbReference type="HAMAP-Rule" id="MF_01445"/>
    </source>
</evidence>
<evidence type="ECO:0000256" key="2">
    <source>
        <dbReference type="SAM" id="MobiDB-lite"/>
    </source>
</evidence>
<evidence type="ECO:0000305" key="3"/>
<comment type="function">
    <text evidence="1">Required for the formation of a threonylcarbamoyl group on adenosine at position 37 (t(6)A37) in tRNAs that read codons beginning with adenine. Is involved in the transfer of the threonylcarbamoyl moiety of threonylcarbamoyl-AMP (TC-AMP) to the N6 group of A37, together with TsaE and TsaB. TsaD likely plays a direct catalytic role in this reaction.</text>
</comment>
<comment type="catalytic activity">
    <reaction evidence="1">
        <text>L-threonylcarbamoyladenylate + adenosine(37) in tRNA = N(6)-L-threonylcarbamoyladenosine(37) in tRNA + AMP + H(+)</text>
        <dbReference type="Rhea" id="RHEA:37059"/>
        <dbReference type="Rhea" id="RHEA-COMP:10162"/>
        <dbReference type="Rhea" id="RHEA-COMP:10163"/>
        <dbReference type="ChEBI" id="CHEBI:15378"/>
        <dbReference type="ChEBI" id="CHEBI:73682"/>
        <dbReference type="ChEBI" id="CHEBI:74411"/>
        <dbReference type="ChEBI" id="CHEBI:74418"/>
        <dbReference type="ChEBI" id="CHEBI:456215"/>
        <dbReference type="EC" id="2.3.1.234"/>
    </reaction>
</comment>
<comment type="cofactor">
    <cofactor evidence="1">
        <name>Fe(2+)</name>
        <dbReference type="ChEBI" id="CHEBI:29033"/>
    </cofactor>
    <text evidence="1">Binds 1 Fe(2+) ion per subunit.</text>
</comment>
<comment type="subcellular location">
    <subcellularLocation>
        <location evidence="1">Cytoplasm</location>
    </subcellularLocation>
</comment>
<comment type="similarity">
    <text evidence="1">Belongs to the KAE1 / TsaD family.</text>
</comment>
<comment type="sequence caution" evidence="3">
    <conflict type="erroneous initiation">
        <sequence resource="EMBL-CDS" id="AAW61620"/>
    </conflict>
</comment>
<feature type="chain" id="PRO_0000303377" description="tRNA N6-adenosine threonylcarbamoyltransferase">
    <location>
        <begin position="1"/>
        <end position="365"/>
    </location>
</feature>
<feature type="region of interest" description="Disordered" evidence="2">
    <location>
        <begin position="340"/>
        <end position="365"/>
    </location>
</feature>
<feature type="binding site" evidence="1">
    <location>
        <position position="122"/>
    </location>
    <ligand>
        <name>Fe cation</name>
        <dbReference type="ChEBI" id="CHEBI:24875"/>
    </ligand>
</feature>
<feature type="binding site" evidence="1">
    <location>
        <position position="126"/>
    </location>
    <ligand>
        <name>Fe cation</name>
        <dbReference type="ChEBI" id="CHEBI:24875"/>
    </ligand>
</feature>
<feature type="binding site" evidence="1">
    <location>
        <begin position="147"/>
        <end position="151"/>
    </location>
    <ligand>
        <name>substrate</name>
    </ligand>
</feature>
<feature type="binding site" evidence="1">
    <location>
        <position position="180"/>
    </location>
    <ligand>
        <name>substrate</name>
    </ligand>
</feature>
<feature type="binding site" evidence="1">
    <location>
        <position position="193"/>
    </location>
    <ligand>
        <name>substrate</name>
    </ligand>
</feature>
<feature type="binding site" evidence="1">
    <location>
        <position position="293"/>
    </location>
    <ligand>
        <name>substrate</name>
    </ligand>
</feature>
<feature type="binding site" evidence="1">
    <location>
        <position position="321"/>
    </location>
    <ligand>
        <name>Fe cation</name>
        <dbReference type="ChEBI" id="CHEBI:24875"/>
    </ligand>
</feature>
<dbReference type="EC" id="2.3.1.234" evidence="1"/>
<dbReference type="EMBL" id="CP000009">
    <property type="protein sequence ID" value="AAW61620.1"/>
    <property type="status" value="ALT_INIT"/>
    <property type="molecule type" value="Genomic_DNA"/>
</dbReference>
<dbReference type="RefSeq" id="WP_024717088.1">
    <property type="nucleotide sequence ID" value="NC_006677.1"/>
</dbReference>
<dbReference type="SMR" id="Q5FPS6"/>
<dbReference type="STRING" id="290633.GOX1882"/>
<dbReference type="KEGG" id="gox:GOX1882"/>
<dbReference type="eggNOG" id="COG0533">
    <property type="taxonomic scope" value="Bacteria"/>
</dbReference>
<dbReference type="HOGENOM" id="CLU_023208_0_2_5"/>
<dbReference type="Proteomes" id="UP000006375">
    <property type="component" value="Chromosome"/>
</dbReference>
<dbReference type="GO" id="GO:0005737">
    <property type="term" value="C:cytoplasm"/>
    <property type="evidence" value="ECO:0007669"/>
    <property type="project" value="UniProtKB-SubCell"/>
</dbReference>
<dbReference type="GO" id="GO:0005506">
    <property type="term" value="F:iron ion binding"/>
    <property type="evidence" value="ECO:0007669"/>
    <property type="project" value="UniProtKB-UniRule"/>
</dbReference>
<dbReference type="GO" id="GO:0061711">
    <property type="term" value="F:N(6)-L-threonylcarbamoyladenine synthase activity"/>
    <property type="evidence" value="ECO:0007669"/>
    <property type="project" value="UniProtKB-EC"/>
</dbReference>
<dbReference type="GO" id="GO:0002949">
    <property type="term" value="P:tRNA threonylcarbamoyladenosine modification"/>
    <property type="evidence" value="ECO:0007669"/>
    <property type="project" value="UniProtKB-UniRule"/>
</dbReference>
<dbReference type="CDD" id="cd24133">
    <property type="entry name" value="ASKHA_NBD_TsaD_bac"/>
    <property type="match status" value="1"/>
</dbReference>
<dbReference type="FunFam" id="3.30.420.40:FF:000040">
    <property type="entry name" value="tRNA N6-adenosine threonylcarbamoyltransferase"/>
    <property type="match status" value="1"/>
</dbReference>
<dbReference type="Gene3D" id="3.30.420.40">
    <property type="match status" value="2"/>
</dbReference>
<dbReference type="HAMAP" id="MF_01445">
    <property type="entry name" value="TsaD"/>
    <property type="match status" value="1"/>
</dbReference>
<dbReference type="InterPro" id="IPR043129">
    <property type="entry name" value="ATPase_NBD"/>
</dbReference>
<dbReference type="InterPro" id="IPR000905">
    <property type="entry name" value="Gcp-like_dom"/>
</dbReference>
<dbReference type="InterPro" id="IPR017861">
    <property type="entry name" value="KAE1/TsaD"/>
</dbReference>
<dbReference type="InterPro" id="IPR017860">
    <property type="entry name" value="Peptidase_M22_CS"/>
</dbReference>
<dbReference type="InterPro" id="IPR022450">
    <property type="entry name" value="TsaD"/>
</dbReference>
<dbReference type="NCBIfam" id="TIGR00329">
    <property type="entry name" value="gcp_kae1"/>
    <property type="match status" value="1"/>
</dbReference>
<dbReference type="NCBIfam" id="TIGR03723">
    <property type="entry name" value="T6A_TsaD_YgjD"/>
    <property type="match status" value="1"/>
</dbReference>
<dbReference type="PANTHER" id="PTHR11735">
    <property type="entry name" value="TRNA N6-ADENOSINE THREONYLCARBAMOYLTRANSFERASE"/>
    <property type="match status" value="1"/>
</dbReference>
<dbReference type="PANTHER" id="PTHR11735:SF6">
    <property type="entry name" value="TRNA N6-ADENOSINE THREONYLCARBAMOYLTRANSFERASE, MITOCHONDRIAL"/>
    <property type="match status" value="1"/>
</dbReference>
<dbReference type="Pfam" id="PF00814">
    <property type="entry name" value="TsaD"/>
    <property type="match status" value="1"/>
</dbReference>
<dbReference type="PRINTS" id="PR00789">
    <property type="entry name" value="OSIALOPTASE"/>
</dbReference>
<dbReference type="SUPFAM" id="SSF53067">
    <property type="entry name" value="Actin-like ATPase domain"/>
    <property type="match status" value="2"/>
</dbReference>
<dbReference type="PROSITE" id="PS01016">
    <property type="entry name" value="GLYCOPROTEASE"/>
    <property type="match status" value="1"/>
</dbReference>
<name>TSAD_GLUOX</name>
<gene>
    <name evidence="1" type="primary">tsaD</name>
    <name type="synonym">gcp</name>
    <name type="ordered locus">GOX1882</name>
</gene>
<organism>
    <name type="scientific">Gluconobacter oxydans (strain 621H)</name>
    <name type="common">Gluconobacter suboxydans</name>
    <dbReference type="NCBI Taxonomy" id="290633"/>
    <lineage>
        <taxon>Bacteria</taxon>
        <taxon>Pseudomonadati</taxon>
        <taxon>Pseudomonadota</taxon>
        <taxon>Alphaproteobacteria</taxon>
        <taxon>Acetobacterales</taxon>
        <taxon>Acetobacteraceae</taxon>
        <taxon>Gluconobacter</taxon>
    </lineage>
</organism>
<reference key="1">
    <citation type="journal article" date="2005" name="Nat. Biotechnol.">
        <title>Complete genome sequence of the acetic acid bacterium Gluconobacter oxydans.</title>
        <authorList>
            <person name="Prust C."/>
            <person name="Hoffmeister M."/>
            <person name="Liesegang H."/>
            <person name="Wiezer A."/>
            <person name="Fricke W.F."/>
            <person name="Ehrenreich A."/>
            <person name="Gottschalk G."/>
            <person name="Deppenmeier U."/>
        </authorList>
    </citation>
    <scope>NUCLEOTIDE SEQUENCE [LARGE SCALE GENOMIC DNA]</scope>
    <source>
        <strain>621H</strain>
    </source>
</reference>
<sequence length="365" mass="38110">MSAPATSPSAPTRPLLAIETSCDDTACAILAWDGTILAEGVLSQTDHAILGGVVPEIAARAHLDALPALVAEVLKKASLTLADIDTFAGTTGPGLIGGLIVGSSYAKGLAMALHRPFVAVNHIEAHILTPRLPSLGADLHFPYLTMLVSGGHCQCVSVEETGRYVRLGGTIDDAAGEAFDKVAKMLGLSWPGGPALEKLATEGRDDAYPLPRPLKGREGCDFSFSGLKTAVSRLIDTQDPTGSRDALPRQFAADVAASFQRAVADVMADRAEHALALSPNATALVVAGGVAANKTLRHALEQVAANHGIPFFAPPLRLCTDNAVMVAWAALERLHAGETPNEIDTAARPRWPLSERTPATPEHVS</sequence>